<evidence type="ECO:0000255" key="1">
    <source>
        <dbReference type="HAMAP-Rule" id="MF_00462"/>
    </source>
</evidence>
<name>RNFD_BUCBP</name>
<gene>
    <name evidence="1" type="primary">rnfD</name>
    <name type="ordered locus">bbp_111</name>
</gene>
<sequence length="354" mass="41187">MKYMRHFLDFYHHKNTSEIMLLVFCAAVPGICTEIYYFGFGVLFQILLSVFFSVSFEFLVKRLRKQTVKSLFSDNSAAVTGVLIGISLPSLSPWWLSFFGAFFSIVIAKQIYGGLGNNIFNPAMTGYSILLVSFPILMTNWSFQNSSYFNLFDLNNTFSVIFCTDINHYYSLIDEFQMMYKFITQATPLEQIRTHVLDFNNKIDNIFEFVNYNYYFKNWKWISINISFLIGGIVLLGFNVICWRIPVSILFSLYVFFALDYYFFKKSMYYPIMQLFFGSTMFSVFFIATDPVTTSITKIGRIVFGCIVGFLIWLIRSFGNYPDAIAFSILLSNSIVPLIDHYTQPRVYGYVKKK</sequence>
<dbReference type="EC" id="7.-.-.-" evidence="1"/>
<dbReference type="EMBL" id="AE016826">
    <property type="protein sequence ID" value="AAO26845.1"/>
    <property type="molecule type" value="Genomic_DNA"/>
</dbReference>
<dbReference type="RefSeq" id="WP_011091246.1">
    <property type="nucleotide sequence ID" value="NC_004545.1"/>
</dbReference>
<dbReference type="SMR" id="Q89AW7"/>
<dbReference type="STRING" id="224915.bbp_111"/>
<dbReference type="KEGG" id="bab:bbp_111"/>
<dbReference type="eggNOG" id="COG4658">
    <property type="taxonomic scope" value="Bacteria"/>
</dbReference>
<dbReference type="HOGENOM" id="CLU_042020_0_0_6"/>
<dbReference type="OrthoDB" id="9776359at2"/>
<dbReference type="Proteomes" id="UP000000601">
    <property type="component" value="Chromosome"/>
</dbReference>
<dbReference type="GO" id="GO:0005886">
    <property type="term" value="C:plasma membrane"/>
    <property type="evidence" value="ECO:0007669"/>
    <property type="project" value="UniProtKB-SubCell"/>
</dbReference>
<dbReference type="GO" id="GO:0022900">
    <property type="term" value="P:electron transport chain"/>
    <property type="evidence" value="ECO:0007669"/>
    <property type="project" value="UniProtKB-UniRule"/>
</dbReference>
<dbReference type="GO" id="GO:0055085">
    <property type="term" value="P:transmembrane transport"/>
    <property type="evidence" value="ECO:0007669"/>
    <property type="project" value="InterPro"/>
</dbReference>
<dbReference type="HAMAP" id="MF_00462">
    <property type="entry name" value="RsxD_RnfD"/>
    <property type="match status" value="1"/>
</dbReference>
<dbReference type="InterPro" id="IPR004338">
    <property type="entry name" value="NqrB/RnfD"/>
</dbReference>
<dbReference type="InterPro" id="IPR011303">
    <property type="entry name" value="RnfD_bac"/>
</dbReference>
<dbReference type="NCBIfam" id="TIGR01946">
    <property type="entry name" value="rnfD"/>
    <property type="match status" value="1"/>
</dbReference>
<dbReference type="PANTHER" id="PTHR30578">
    <property type="entry name" value="ELECTRON TRANSPORT COMPLEX PROTEIN RNFD"/>
    <property type="match status" value="1"/>
</dbReference>
<dbReference type="PANTHER" id="PTHR30578:SF0">
    <property type="entry name" value="ION-TRANSLOCATING OXIDOREDUCTASE COMPLEX SUBUNIT D"/>
    <property type="match status" value="1"/>
</dbReference>
<dbReference type="Pfam" id="PF03116">
    <property type="entry name" value="NQR2_RnfD_RnfE"/>
    <property type="match status" value="1"/>
</dbReference>
<organism>
    <name type="scientific">Buchnera aphidicola subsp. Baizongia pistaciae (strain Bp)</name>
    <dbReference type="NCBI Taxonomy" id="224915"/>
    <lineage>
        <taxon>Bacteria</taxon>
        <taxon>Pseudomonadati</taxon>
        <taxon>Pseudomonadota</taxon>
        <taxon>Gammaproteobacteria</taxon>
        <taxon>Enterobacterales</taxon>
        <taxon>Erwiniaceae</taxon>
        <taxon>Buchnera</taxon>
    </lineage>
</organism>
<feature type="chain" id="PRO_0000074452" description="Ion-translocating oxidoreductase complex subunit D">
    <location>
        <begin position="1"/>
        <end position="354"/>
    </location>
</feature>
<feature type="transmembrane region" description="Helical" evidence="1">
    <location>
        <begin position="19"/>
        <end position="39"/>
    </location>
</feature>
<feature type="transmembrane region" description="Helical" evidence="1">
    <location>
        <begin position="40"/>
        <end position="60"/>
    </location>
</feature>
<feature type="transmembrane region" description="Helical" evidence="1">
    <location>
        <begin position="77"/>
        <end position="99"/>
    </location>
</feature>
<feature type="transmembrane region" description="Helical" evidence="1">
    <location>
        <begin position="119"/>
        <end position="139"/>
    </location>
</feature>
<feature type="transmembrane region" description="Helical" evidence="1">
    <location>
        <begin position="221"/>
        <end position="241"/>
    </location>
</feature>
<feature type="transmembrane region" description="Helical" evidence="1">
    <location>
        <begin position="245"/>
        <end position="265"/>
    </location>
</feature>
<feature type="transmembrane region" description="Helical" evidence="1">
    <location>
        <begin position="268"/>
        <end position="288"/>
    </location>
</feature>
<feature type="transmembrane region" description="Helical" evidence="1">
    <location>
        <begin position="295"/>
        <end position="315"/>
    </location>
</feature>
<feature type="transmembrane region" description="Helical" evidence="1">
    <location>
        <begin position="319"/>
        <end position="339"/>
    </location>
</feature>
<feature type="modified residue" description="FMN phosphoryl threonine" evidence="1">
    <location>
        <position position="187"/>
    </location>
</feature>
<keyword id="KW-0997">Cell inner membrane</keyword>
<keyword id="KW-1003">Cell membrane</keyword>
<keyword id="KW-0249">Electron transport</keyword>
<keyword id="KW-0285">Flavoprotein</keyword>
<keyword id="KW-0288">FMN</keyword>
<keyword id="KW-0472">Membrane</keyword>
<keyword id="KW-0597">Phosphoprotein</keyword>
<keyword id="KW-1185">Reference proteome</keyword>
<keyword id="KW-1278">Translocase</keyword>
<keyword id="KW-0812">Transmembrane</keyword>
<keyword id="KW-1133">Transmembrane helix</keyword>
<keyword id="KW-0813">Transport</keyword>
<accession>Q89AW7</accession>
<reference key="1">
    <citation type="journal article" date="2003" name="Proc. Natl. Acad. Sci. U.S.A.">
        <title>Reductive genome evolution in Buchnera aphidicola.</title>
        <authorList>
            <person name="van Ham R.C.H.J."/>
            <person name="Kamerbeek J."/>
            <person name="Palacios C."/>
            <person name="Rausell C."/>
            <person name="Abascal F."/>
            <person name="Bastolla U."/>
            <person name="Fernandez J.M."/>
            <person name="Jimenez L."/>
            <person name="Postigo M."/>
            <person name="Silva F.J."/>
            <person name="Tamames J."/>
            <person name="Viguera E."/>
            <person name="Latorre A."/>
            <person name="Valencia A."/>
            <person name="Moran F."/>
            <person name="Moya A."/>
        </authorList>
    </citation>
    <scope>NUCLEOTIDE SEQUENCE [LARGE SCALE GENOMIC DNA]</scope>
    <source>
        <strain>Bp</strain>
    </source>
</reference>
<proteinExistence type="inferred from homology"/>
<comment type="function">
    <text evidence="1">Part of a membrane-bound complex that couples electron transfer with translocation of ions across the membrane.</text>
</comment>
<comment type="cofactor">
    <cofactor evidence="1">
        <name>FMN</name>
        <dbReference type="ChEBI" id="CHEBI:58210"/>
    </cofactor>
</comment>
<comment type="subunit">
    <text evidence="1">The complex is composed of six subunits: RnfA, RnfB, RnfC, RnfD, RnfE and RnfG.</text>
</comment>
<comment type="subcellular location">
    <subcellularLocation>
        <location evidence="1">Cell inner membrane</location>
        <topology evidence="1">Multi-pass membrane protein</topology>
    </subcellularLocation>
</comment>
<comment type="similarity">
    <text evidence="1">Belongs to the NqrB/RnfD family.</text>
</comment>
<protein>
    <recommendedName>
        <fullName evidence="1">Ion-translocating oxidoreductase complex subunit D</fullName>
        <ecNumber evidence="1">7.-.-.-</ecNumber>
    </recommendedName>
    <alternativeName>
        <fullName evidence="1">Rnf electron transport complex subunit D</fullName>
    </alternativeName>
</protein>